<protein>
    <recommendedName>
        <fullName evidence="16">Interferon alpha-inducible protein 27, mitochondrial</fullName>
        <shortName>p27</shortName>
    </recommendedName>
    <alternativeName>
        <fullName>Interferon alpha-induced 11.5 kDa protein</fullName>
    </alternativeName>
    <alternativeName>
        <fullName evidence="14">Interferon-stimulated gene 12a protein</fullName>
        <shortName evidence="14">ISG12(a)</shortName>
        <shortName evidence="15">ISG12A</shortName>
    </alternativeName>
</protein>
<accession>P40305</accession>
<accession>A0A087WZF8</accession>
<accession>A8K0H0</accession>
<accession>Q53YA6</accession>
<accession>Q6IEC1</accession>
<accession>Q7Z5R0</accession>
<accession>Q7Z5R1</accession>
<accession>Q7Z5R2</accession>
<accession>Q96BK3</accession>
<accession>Q9H4B1</accession>
<gene>
    <name evidence="18" type="primary">IFI27</name>
</gene>
<feature type="transit peptide" description="Mitochondrion" evidence="17">
    <location>
        <begin position="1"/>
        <end position="33"/>
    </location>
</feature>
<feature type="chain" id="PRO_0000147372" description="Interferon alpha-inducible protein 27, mitochondrial">
    <location>
        <begin position="34"/>
        <end position="122"/>
    </location>
</feature>
<feature type="transmembrane region" description="Helical" evidence="2">
    <location>
        <begin position="34"/>
        <end position="57"/>
    </location>
</feature>
<feature type="transmembrane region" description="Helical" evidence="2">
    <location>
        <begin position="71"/>
        <end position="91"/>
    </location>
</feature>
<feature type="transmembrane region" description="Helical" evidence="2">
    <location>
        <begin position="99"/>
        <end position="119"/>
    </location>
</feature>
<feature type="region of interest" description="Mediates interaction with SKP2 and hepatitis C virus non-structural protein NS5A" evidence="9">
    <location>
        <begin position="76"/>
        <end position="122"/>
    </location>
</feature>
<feature type="region of interest" description="Required for hepatitis C virus non-structural protein NS5A degradation" evidence="9">
    <location>
        <begin position="103"/>
        <end position="112"/>
    </location>
</feature>
<feature type="cross-link" description="Glycyl lysine isopeptide (Lys-Gly) (interchain with G-Cter in ubiquitin)" evidence="12">
    <location>
        <position position="69"/>
    </location>
</feature>
<feature type="splice variant" id="VSP_059907" description="In isoform 4.">
    <location>
        <begin position="1"/>
        <end position="48"/>
    </location>
</feature>
<feature type="splice variant" id="VSP_059908" description="In isoform 3.">
    <location>
        <begin position="1"/>
        <end position="43"/>
    </location>
</feature>
<feature type="splice variant" id="VSP_059909" description="In isoform 2.">
    <location>
        <begin position="43"/>
        <end position="45"/>
    </location>
</feature>
<feature type="sequence variant" id="VAR_028066" description="In dbSNP:rs2227974.">
    <original>S</original>
    <variation>F</variation>
    <location>
        <position position="109"/>
    </location>
</feature>
<feature type="mutagenesis site" description="Increased pro-apoptotic activity; when associated with D-96." evidence="10">
    <original>F</original>
    <variation>D</variation>
    <location>
        <position position="56"/>
    </location>
</feature>
<feature type="mutagenesis site" description="Complete loss of TRIM21-mediated ubiquitination." evidence="12">
    <original>K</original>
    <variation>R</variation>
    <location>
        <position position="69"/>
    </location>
</feature>
<feature type="mutagenesis site" description="Increased pro-apoptotic activity; when associated with D-56." evidence="10">
    <original>A</original>
    <variation>D</variation>
    <location>
        <position position="96"/>
    </location>
</feature>
<feature type="sequence conflict" description="In Ref. 1; CAA47739." evidence="16" ref="1">
    <original>A</original>
    <variation>G</variation>
    <location>
        <position position="89"/>
    </location>
</feature>
<name>IFI27_HUMAN</name>
<sequence>MEASALTSSAVTSVAKVVRVASGSAVVLPLARIATVVIGGVVAMAAVPMVLSAMGFTAAGIASSSIAAKMMSAAAIANGGGVASGSLVATLQSLGATGLSGLTKFILGSIGSAIAAVIARFY</sequence>
<proteinExistence type="evidence at protein level"/>
<reference key="1">
    <citation type="journal article" date="1993" name="Cancer Res.">
        <title>Identification of a new interferon-alpha-inducible gene (p27) on human chromosome 14q32 and its expression in breast carcinoma.</title>
        <authorList>
            <person name="Rasmussen U.B."/>
            <person name="Wolf C."/>
            <person name="Mattei M.-G."/>
            <person name="Chenard M.P."/>
            <person name="Bellocq J.-P."/>
            <person name="Chambon P."/>
            <person name="Rio M.C."/>
            <person name="Basset P."/>
        </authorList>
    </citation>
    <scope>NUCLEOTIDE SEQUENCE [MRNA] (ISOFORM 2)</scope>
</reference>
<reference key="2">
    <citation type="submission" date="2003-05" db="EMBL/GenBank/DDBJ databases">
        <title>Cloning of human full-length CDSs in BD Creator(TM) system donor vector.</title>
        <authorList>
            <person name="Kalnine N."/>
            <person name="Chen X."/>
            <person name="Rolfs A."/>
            <person name="Halleck A."/>
            <person name="Hines L."/>
            <person name="Eisenstein S."/>
            <person name="Koundinya M."/>
            <person name="Raphael J."/>
            <person name="Moreira D."/>
            <person name="Kelley T."/>
            <person name="LaBaer J."/>
            <person name="Lin Y."/>
            <person name="Phelan M."/>
            <person name="Farmer A."/>
        </authorList>
    </citation>
    <scope>NUCLEOTIDE SEQUENCE [LARGE SCALE MRNA] (ISOFORM 2)</scope>
</reference>
<reference key="3">
    <citation type="journal article" date="2004" name="Nat. Genet.">
        <title>Complete sequencing and characterization of 21,243 full-length human cDNAs.</title>
        <authorList>
            <person name="Ota T."/>
            <person name="Suzuki Y."/>
            <person name="Nishikawa T."/>
            <person name="Otsuki T."/>
            <person name="Sugiyama T."/>
            <person name="Irie R."/>
            <person name="Wakamatsu A."/>
            <person name="Hayashi K."/>
            <person name="Sato H."/>
            <person name="Nagai K."/>
            <person name="Kimura K."/>
            <person name="Makita H."/>
            <person name="Sekine M."/>
            <person name="Obayashi M."/>
            <person name="Nishi T."/>
            <person name="Shibahara T."/>
            <person name="Tanaka T."/>
            <person name="Ishii S."/>
            <person name="Yamamoto J."/>
            <person name="Saito K."/>
            <person name="Kawai Y."/>
            <person name="Isono Y."/>
            <person name="Nakamura Y."/>
            <person name="Nagahari K."/>
            <person name="Murakami K."/>
            <person name="Yasuda T."/>
            <person name="Iwayanagi T."/>
            <person name="Wagatsuma M."/>
            <person name="Shiratori A."/>
            <person name="Sudo H."/>
            <person name="Hosoiri T."/>
            <person name="Kaku Y."/>
            <person name="Kodaira H."/>
            <person name="Kondo H."/>
            <person name="Sugawara M."/>
            <person name="Takahashi M."/>
            <person name="Kanda K."/>
            <person name="Yokoi T."/>
            <person name="Furuya T."/>
            <person name="Kikkawa E."/>
            <person name="Omura Y."/>
            <person name="Abe K."/>
            <person name="Kamihara K."/>
            <person name="Katsuta N."/>
            <person name="Sato K."/>
            <person name="Tanikawa M."/>
            <person name="Yamazaki M."/>
            <person name="Ninomiya K."/>
            <person name="Ishibashi T."/>
            <person name="Yamashita H."/>
            <person name="Murakawa K."/>
            <person name="Fujimori K."/>
            <person name="Tanai H."/>
            <person name="Kimata M."/>
            <person name="Watanabe M."/>
            <person name="Hiraoka S."/>
            <person name="Chiba Y."/>
            <person name="Ishida S."/>
            <person name="Ono Y."/>
            <person name="Takiguchi S."/>
            <person name="Watanabe S."/>
            <person name="Yosida M."/>
            <person name="Hotuta T."/>
            <person name="Kusano J."/>
            <person name="Kanehori K."/>
            <person name="Takahashi-Fujii A."/>
            <person name="Hara H."/>
            <person name="Tanase T.-O."/>
            <person name="Nomura Y."/>
            <person name="Togiya S."/>
            <person name="Komai F."/>
            <person name="Hara R."/>
            <person name="Takeuchi K."/>
            <person name="Arita M."/>
            <person name="Imose N."/>
            <person name="Musashino K."/>
            <person name="Yuuki H."/>
            <person name="Oshima A."/>
            <person name="Sasaki N."/>
            <person name="Aotsuka S."/>
            <person name="Yoshikawa Y."/>
            <person name="Matsunawa H."/>
            <person name="Ichihara T."/>
            <person name="Shiohata N."/>
            <person name="Sano S."/>
            <person name="Moriya S."/>
            <person name="Momiyama H."/>
            <person name="Satoh N."/>
            <person name="Takami S."/>
            <person name="Terashima Y."/>
            <person name="Suzuki O."/>
            <person name="Nakagawa S."/>
            <person name="Senoh A."/>
            <person name="Mizoguchi H."/>
            <person name="Goto Y."/>
            <person name="Shimizu F."/>
            <person name="Wakebe H."/>
            <person name="Hishigaki H."/>
            <person name="Watanabe T."/>
            <person name="Sugiyama A."/>
            <person name="Takemoto M."/>
            <person name="Kawakami B."/>
            <person name="Yamazaki M."/>
            <person name="Watanabe K."/>
            <person name="Kumagai A."/>
            <person name="Itakura S."/>
            <person name="Fukuzumi Y."/>
            <person name="Fujimori Y."/>
            <person name="Komiyama M."/>
            <person name="Tashiro H."/>
            <person name="Tanigami A."/>
            <person name="Fujiwara T."/>
            <person name="Ono T."/>
            <person name="Yamada K."/>
            <person name="Fujii Y."/>
            <person name="Ozaki K."/>
            <person name="Hirao M."/>
            <person name="Ohmori Y."/>
            <person name="Kawabata A."/>
            <person name="Hikiji T."/>
            <person name="Kobatake N."/>
            <person name="Inagaki H."/>
            <person name="Ikema Y."/>
            <person name="Okamoto S."/>
            <person name="Okitani R."/>
            <person name="Kawakami T."/>
            <person name="Noguchi S."/>
            <person name="Itoh T."/>
            <person name="Shigeta K."/>
            <person name="Senba T."/>
            <person name="Matsumura K."/>
            <person name="Nakajima Y."/>
            <person name="Mizuno T."/>
            <person name="Morinaga M."/>
            <person name="Sasaki M."/>
            <person name="Togashi T."/>
            <person name="Oyama M."/>
            <person name="Hata H."/>
            <person name="Watanabe M."/>
            <person name="Komatsu T."/>
            <person name="Mizushima-Sugano J."/>
            <person name="Satoh T."/>
            <person name="Shirai Y."/>
            <person name="Takahashi Y."/>
            <person name="Nakagawa K."/>
            <person name="Okumura K."/>
            <person name="Nagase T."/>
            <person name="Nomura N."/>
            <person name="Kikuchi H."/>
            <person name="Masuho Y."/>
            <person name="Yamashita R."/>
            <person name="Nakai K."/>
            <person name="Yada T."/>
            <person name="Nakamura Y."/>
            <person name="Ohara O."/>
            <person name="Isogai T."/>
            <person name="Sugano S."/>
        </authorList>
    </citation>
    <scope>NUCLEOTIDE SEQUENCE [LARGE SCALE MRNA] (ISOFORM 1)</scope>
    <source>
        <tissue>Cerebellum</tissue>
        <tissue>Stomach</tissue>
    </source>
</reference>
<reference key="4">
    <citation type="journal article" date="2007" name="BMC Genomics">
        <title>The full-ORF clone resource of the German cDNA consortium.</title>
        <authorList>
            <person name="Bechtel S."/>
            <person name="Rosenfelder H."/>
            <person name="Duda A."/>
            <person name="Schmidt C.P."/>
            <person name="Ernst U."/>
            <person name="Wellenreuther R."/>
            <person name="Mehrle A."/>
            <person name="Schuster C."/>
            <person name="Bahr A."/>
            <person name="Bloecker H."/>
            <person name="Heubner D."/>
            <person name="Hoerlein A."/>
            <person name="Michel G."/>
            <person name="Wedler H."/>
            <person name="Koehrer K."/>
            <person name="Ottenwaelder B."/>
            <person name="Poustka A."/>
            <person name="Wiemann S."/>
            <person name="Schupp I."/>
        </authorList>
    </citation>
    <scope>NUCLEOTIDE SEQUENCE [LARGE SCALE MRNA] (ISOFORM 2)</scope>
</reference>
<reference key="5">
    <citation type="journal article" date="2003" name="Nature">
        <title>The DNA sequence and analysis of human chromosome 14.</title>
        <authorList>
            <person name="Heilig R."/>
            <person name="Eckenberg R."/>
            <person name="Petit J.-L."/>
            <person name="Fonknechten N."/>
            <person name="Da Silva C."/>
            <person name="Cattolico L."/>
            <person name="Levy M."/>
            <person name="Barbe V."/>
            <person name="De Berardinis V."/>
            <person name="Ureta-Vidal A."/>
            <person name="Pelletier E."/>
            <person name="Vico V."/>
            <person name="Anthouard V."/>
            <person name="Rowen L."/>
            <person name="Madan A."/>
            <person name="Qin S."/>
            <person name="Sun H."/>
            <person name="Du H."/>
            <person name="Pepin K."/>
            <person name="Artiguenave F."/>
            <person name="Robert C."/>
            <person name="Cruaud C."/>
            <person name="Bruels T."/>
            <person name="Jaillon O."/>
            <person name="Friedlander L."/>
            <person name="Samson G."/>
            <person name="Brottier P."/>
            <person name="Cure S."/>
            <person name="Segurens B."/>
            <person name="Aniere F."/>
            <person name="Samain S."/>
            <person name="Crespeau H."/>
            <person name="Abbasi N."/>
            <person name="Aiach N."/>
            <person name="Boscus D."/>
            <person name="Dickhoff R."/>
            <person name="Dors M."/>
            <person name="Dubois I."/>
            <person name="Friedman C."/>
            <person name="Gouyvenoux M."/>
            <person name="James R."/>
            <person name="Madan A."/>
            <person name="Mairey-Estrada B."/>
            <person name="Mangenot S."/>
            <person name="Martins N."/>
            <person name="Menard M."/>
            <person name="Oztas S."/>
            <person name="Ratcliffe A."/>
            <person name="Shaffer T."/>
            <person name="Trask B."/>
            <person name="Vacherie B."/>
            <person name="Bellemere C."/>
            <person name="Belser C."/>
            <person name="Besnard-Gonnet M."/>
            <person name="Bartol-Mavel D."/>
            <person name="Boutard M."/>
            <person name="Briez-Silla S."/>
            <person name="Combette S."/>
            <person name="Dufosse-Laurent V."/>
            <person name="Ferron C."/>
            <person name="Lechaplais C."/>
            <person name="Louesse C."/>
            <person name="Muselet D."/>
            <person name="Magdelenat G."/>
            <person name="Pateau E."/>
            <person name="Petit E."/>
            <person name="Sirvain-Trukniewicz P."/>
            <person name="Trybou A."/>
            <person name="Vega-Czarny N."/>
            <person name="Bataille E."/>
            <person name="Bluet E."/>
            <person name="Bordelais I."/>
            <person name="Dubois M."/>
            <person name="Dumont C."/>
            <person name="Guerin T."/>
            <person name="Haffray S."/>
            <person name="Hammadi R."/>
            <person name="Muanga J."/>
            <person name="Pellouin V."/>
            <person name="Robert D."/>
            <person name="Wunderle E."/>
            <person name="Gauguet G."/>
            <person name="Roy A."/>
            <person name="Sainte-Marthe L."/>
            <person name="Verdier J."/>
            <person name="Verdier-Discala C."/>
            <person name="Hillier L.W."/>
            <person name="Fulton L."/>
            <person name="McPherson J."/>
            <person name="Matsuda F."/>
            <person name="Wilson R."/>
            <person name="Scarpelli C."/>
            <person name="Gyapay G."/>
            <person name="Wincker P."/>
            <person name="Saurin W."/>
            <person name="Quetier F."/>
            <person name="Waterston R."/>
            <person name="Hood L."/>
            <person name="Weissenbach J."/>
        </authorList>
    </citation>
    <scope>NUCLEOTIDE SEQUENCE [LARGE SCALE GENOMIC DNA]</scope>
</reference>
<reference key="6">
    <citation type="submission" date="2005-07" db="EMBL/GenBank/DDBJ databases">
        <authorList>
            <person name="Mural R.J."/>
            <person name="Istrail S."/>
            <person name="Sutton G.G."/>
            <person name="Florea L."/>
            <person name="Halpern A.L."/>
            <person name="Mobarry C.M."/>
            <person name="Lippert R."/>
            <person name="Walenz B."/>
            <person name="Shatkay H."/>
            <person name="Dew I."/>
            <person name="Miller J.R."/>
            <person name="Flanigan M.J."/>
            <person name="Edwards N.J."/>
            <person name="Bolanos R."/>
            <person name="Fasulo D."/>
            <person name="Halldorsson B.V."/>
            <person name="Hannenhalli S."/>
            <person name="Turner R."/>
            <person name="Yooseph S."/>
            <person name="Lu F."/>
            <person name="Nusskern D.R."/>
            <person name="Shue B.C."/>
            <person name="Zheng X.H."/>
            <person name="Zhong F."/>
            <person name="Delcher A.L."/>
            <person name="Huson D.H."/>
            <person name="Kravitz S.A."/>
            <person name="Mouchard L."/>
            <person name="Reinert K."/>
            <person name="Remington K.A."/>
            <person name="Clark A.G."/>
            <person name="Waterman M.S."/>
            <person name="Eichler E.E."/>
            <person name="Adams M.D."/>
            <person name="Hunkapiller M.W."/>
            <person name="Myers E.W."/>
            <person name="Venter J.C."/>
        </authorList>
    </citation>
    <scope>NUCLEOTIDE SEQUENCE [LARGE SCALE GENOMIC DNA]</scope>
</reference>
<reference key="7">
    <citation type="journal article" date="2004" name="Genome Res.">
        <title>The status, quality, and expansion of the NIH full-length cDNA project: the Mammalian Gene Collection (MGC).</title>
        <authorList>
            <consortium name="The MGC Project Team"/>
        </authorList>
    </citation>
    <scope>NUCLEOTIDE SEQUENCE [LARGE SCALE MRNA] (ISOFORM 2)</scope>
    <source>
        <tissue>Uterus</tissue>
    </source>
</reference>
<reference key="8">
    <citation type="journal article" date="2001" name="Eur. J. Biochem.">
        <title>The interferon alpha induced protein ISG12 is localized to the nuclear membrane.</title>
        <authorList>
            <person name="Martensen P.M."/>
            <person name="Sogaard T.M."/>
            <person name="Gjermandsen I.M."/>
            <person name="Buttenschon H.N."/>
            <person name="Rossing A.B."/>
            <person name="Bonnevie-Nielsen V."/>
            <person name="Rosada C."/>
            <person name="Simonsen J.L."/>
            <person name="Justesen J."/>
        </authorList>
    </citation>
    <scope>NUCLEOTIDE SEQUENCE [MRNA] OF 1-60 (ISOFORM 1)</scope>
    <scope>SUBCELLULAR LOCATION</scope>
</reference>
<reference key="9">
    <citation type="journal article" date="2003" name="Biochim. Biophys. Acta">
        <title>A nine-nucleotide deletion and splice variation in the coding region of the interferon induced ISG12 gene.</title>
        <authorList>
            <person name="Smidt K.C."/>
            <person name="Hansen L.L."/>
            <person name="Soegaard T.M."/>
            <person name="Petersen L.K."/>
            <person name="Knudsen U.B."/>
            <person name="Martensen P.M."/>
        </authorList>
    </citation>
    <scope>NUCLEOTIDE SEQUENCE [MRNA] OF 1-60 (ISOFORMS 2; 3 AND 4)</scope>
</reference>
<reference key="10">
    <citation type="journal article" date="2004" name="BMC Genomics">
        <title>Identification of a novel gene family that includes the interferon-inducible human genes 6-16 and ISG12.</title>
        <authorList>
            <person name="Parker N."/>
            <person name="Porter A.C.G."/>
        </authorList>
    </citation>
    <scope>IDENTIFICATION</scope>
    <scope>INDUCTION</scope>
</reference>
<reference key="11">
    <citation type="journal article" date="2008" name="Apoptosis">
        <title>Mitochondrial localization and pro-apoptotic effects of the interferon-inducible protein ISG12a.</title>
        <authorList>
            <person name="Rosebeck S."/>
            <person name="Leaman D.W."/>
        </authorList>
    </citation>
    <scope>FUNCTION</scope>
    <scope>SUBCELLULAR LOCATION</scope>
    <scope>INDUCTION</scope>
    <scope>TRANSIT PEPTIDE</scope>
</reference>
<reference key="12">
    <citation type="journal article" date="2012" name="Circ. Res.">
        <title>The interferon stimulated gene 12 inactivates vasculoprotective functions of NR4A nuclear receptors.</title>
        <authorList>
            <person name="Papac-Milicevic N."/>
            <person name="Breuss J.M."/>
            <person name="Zaujec J."/>
            <person name="Ryban L."/>
            <person name="Plyushch T."/>
            <person name="Wagner G.A."/>
            <person name="Fenzl S."/>
            <person name="Dremsek P."/>
            <person name="Cabaravdic M."/>
            <person name="Steiner M."/>
            <person name="Glass C.K."/>
            <person name="Binder C.J."/>
            <person name="Uhrin P."/>
            <person name="Binder B.R."/>
        </authorList>
    </citation>
    <scope>FUNCTION</scope>
    <scope>INTERACTION WITH NR4A1</scope>
    <scope>SUBCELLULAR LOCATION</scope>
    <scope>INDUCTION BY INTERFERON</scope>
</reference>
<reference key="13">
    <citation type="journal article" date="2014" name="Oncotarget">
        <title>miR-942 decreases TRAIL-induced apoptosis through ISG12a downregulation and is regulated by AKT.</title>
        <authorList>
            <person name="Liu N."/>
            <person name="Zuo C."/>
            <person name="Wang X."/>
            <person name="Chen T."/>
            <person name="Yang D."/>
            <person name="Wang J."/>
            <person name="Zhu H."/>
        </authorList>
    </citation>
    <scope>FUNCTION</scope>
</reference>
<reference key="14">
    <citation type="journal article" date="2016" name="J. Virol.">
        <title>ISG12a Restricts Hepatitis C Virus Infection through the Ubiquitination-Dependent Degradation Pathway.</title>
        <authorList>
            <person name="Xue B."/>
            <person name="Yang D."/>
            <person name="Wang J."/>
            <person name="Xu Y."/>
            <person name="Wang X."/>
            <person name="Qin Y."/>
            <person name="Tian R."/>
            <person name="Chen S."/>
            <person name="Xie Q."/>
            <person name="Liu N."/>
            <person name="Zhu H."/>
        </authorList>
    </citation>
    <scope>FUNCTION</scope>
    <scope>INTERACTION WITH SKP2 AND HEPATITIS C VIRUS NON-STRUCTURAL PROTEIN NS5A</scope>
    <scope>REGION</scope>
</reference>
<reference key="15">
    <citation type="journal article" date="2017" name="Biol. Cell">
        <title>Apoptotic properties of the type 1 interferon induced family of human mitochondrial membrane ISG12 proteins.</title>
        <authorList>
            <person name="Gytz H."/>
            <person name="Hansen M.F."/>
            <person name="Skovbjerg S."/>
            <person name="Kristensen A.C."/>
            <person name="Hoerlyck S."/>
            <person name="Jensen M.B."/>
            <person name="Fredborg M."/>
            <person name="Markert L.D."/>
            <person name="McMillan N.A."/>
            <person name="Christensen E.I."/>
            <person name="Martensen P.M."/>
        </authorList>
    </citation>
    <scope>FUNCTION</scope>
    <scope>SUBUNIT</scope>
    <scope>INTERACTION WITH BCL-2</scope>
    <scope>SUBCELLULAR LOCATION</scope>
    <scope>ALTERNATIVE SPLICING</scope>
    <scope>MUTAGENESIS OF PHE-56 AND ALA-96</scope>
</reference>
<reference key="16">
    <citation type="journal article" date="2017" name="Virus Res.">
        <title>ISG12a inhibits HCV replication and potentiates the anti-HCV activity of IFN-alpha through activation of the Jak/STAT signaling pathway independent of autophagy and apoptosis.</title>
        <authorList>
            <person name="Chen Y."/>
            <person name="Jiao B."/>
            <person name="Yao M."/>
            <person name="Shi X."/>
            <person name="Zheng Z."/>
            <person name="Li S."/>
            <person name="Chen L."/>
        </authorList>
    </citation>
    <scope>FUNCTION</scope>
    <scope>INDUCTION BY INTERFERON</scope>
</reference>
<reference key="17">
    <citation type="journal article" date="2022" name="J. Immunol.">
        <title>TRIM21 Regulates Virus-Induced Cell Pyroptosis through Polyubiquitination of ISG12a.</title>
        <authorList>
            <person name="Guo M."/>
            <person name="Cao W."/>
            <person name="Chen S."/>
            <person name="Tian R."/>
            <person name="Xue B."/>
            <person name="Wang L."/>
            <person name="Liu Q."/>
            <person name="Deng R."/>
            <person name="Wang X."/>
            <person name="Wang Z."/>
            <person name="Zhang Y."/>
            <person name="Yang D."/>
            <person name="Zuo C."/>
            <person name="Li G."/>
            <person name="Tang S."/>
            <person name="Zhu H."/>
        </authorList>
    </citation>
    <scope>FUNCTION</scope>
    <scope>SUBCELLULAR LOCATION</scope>
    <scope>MUTAGENESIS OF LYS-69</scope>
    <scope>UBIQUITINATION BY TRIM21 AT LYS-69</scope>
</reference>
<evidence type="ECO:0000250" key="1">
    <source>
        <dbReference type="UniProtKB" id="Q8R412"/>
    </source>
</evidence>
<evidence type="ECO:0000255" key="2"/>
<evidence type="ECO:0000269" key="3">
    <source>
    </source>
</evidence>
<evidence type="ECO:0000269" key="4">
    <source>
    </source>
</evidence>
<evidence type="ECO:0000269" key="5">
    <source>
    </source>
</evidence>
<evidence type="ECO:0000269" key="6">
    <source>
    </source>
</evidence>
<evidence type="ECO:0000269" key="7">
    <source>
    </source>
</evidence>
<evidence type="ECO:0000269" key="8">
    <source>
    </source>
</evidence>
<evidence type="ECO:0000269" key="9">
    <source>
    </source>
</evidence>
<evidence type="ECO:0000269" key="10">
    <source>
    </source>
</evidence>
<evidence type="ECO:0000269" key="11">
    <source>
    </source>
</evidence>
<evidence type="ECO:0000269" key="12">
    <source>
    </source>
</evidence>
<evidence type="ECO:0000303" key="13">
    <source>
    </source>
</evidence>
<evidence type="ECO:0000303" key="14">
    <source>
    </source>
</evidence>
<evidence type="ECO:0000303" key="15">
    <source>
    </source>
</evidence>
<evidence type="ECO:0000305" key="16"/>
<evidence type="ECO:0000305" key="17">
    <source>
    </source>
</evidence>
<evidence type="ECO:0000312" key="18">
    <source>
        <dbReference type="HGNC" id="HGNC:5397"/>
    </source>
</evidence>
<keyword id="KW-0025">Alternative splicing</keyword>
<keyword id="KW-0051">Antiviral defense</keyword>
<keyword id="KW-0053">Apoptosis</keyword>
<keyword id="KW-0256">Endoplasmic reticulum</keyword>
<keyword id="KW-0945">Host-virus interaction</keyword>
<keyword id="KW-0391">Immunity</keyword>
<keyword id="KW-0399">Innate immunity</keyword>
<keyword id="KW-1017">Isopeptide bond</keyword>
<keyword id="KW-0472">Membrane</keyword>
<keyword id="KW-0496">Mitochondrion</keyword>
<keyword id="KW-0539">Nucleus</keyword>
<keyword id="KW-1267">Proteomics identification</keyword>
<keyword id="KW-1185">Reference proteome</keyword>
<keyword id="KW-0804">Transcription</keyword>
<keyword id="KW-0805">Transcription regulation</keyword>
<keyword id="KW-0809">Transit peptide</keyword>
<keyword id="KW-0812">Transmembrane</keyword>
<keyword id="KW-1133">Transmembrane helix</keyword>
<keyword id="KW-0832">Ubl conjugation</keyword>
<comment type="function">
    <text evidence="1 6 7 8 9 10 11 12">Probable adapter protein involved in different biological processes (PubMed:22427340, PubMed:27194766). Part of the signaling pathways that lead to apoptosis (PubMed:18330707, PubMed:24970806, PubMed:27673746). Involved in type-I interferon-induced apoptosis characterized by a rapid and robust release of cytochrome C from the mitochondria and activation of BAX and caspases 2, 3, 6, 8 and 9 (PubMed:18330707, PubMed:27673746). Also functions in TNFSF10-induced apoptosis (PubMed:24970806). May also have a function in the nucleus, where it may be involved in the interferon-induced negative regulation of the transcriptional activity of NR4A1, NR4A2 and NR4A3 through the enhancement of XPO1-mediated nuclear export of these nuclear receptors (PubMed:22427340). May thereby play a role in the vascular response to injury (By similarity). In the innate immune response, has an antiviral activity towards hepatitis C virus/HCV (PubMed:27194766, PubMed:27777077). May prevent the replication of the virus by recruiting both the hepatitis C virus non-structural protein 5A/NS5A and the ubiquitination machinery via SKP2, promoting the ubiquitin-mediated proteasomal degradation of NS5A (PubMed:27194766, PubMed:27777077). Also promotes virus-induced pyroptosis by activating CASP3 in the mitochondria after 'Lys-6'-linked ubiquitination by TRIM21 (PubMed:36426955).</text>
</comment>
<comment type="subunit">
    <text evidence="7 9 10">Homodimer (PubMed:27673746). Interacts with hepatitis C virus/HCV non-structural protein NS5A; promotes the ubiquitin-mediated proteasomal degradation of NS5A (PubMed:27194766). Interacts with SKP2; promotes the ubiquitin-mediated proteasomal degradation of NS5A (PubMed:27194766). Interacts with NR4A1 (PubMed:22427340). May interact with BCL2 (PubMed:27673746).</text>
</comment>
<comment type="interaction">
    <interactant intactId="EBI-23832675">
        <id>P40305-1</id>
    </interactant>
    <interactant intactId="EBI-18302142">
        <id>P55056</id>
        <label>APOC4</label>
    </interactant>
    <organismsDiffer>false</organismsDiffer>
    <experiments>3</experiments>
</comment>
<comment type="interaction">
    <interactant intactId="EBI-27124263">
        <id>P40305-2</id>
    </interactant>
    <interactant intactId="EBI-721550">
        <id>P22736</id>
        <label>NR4A1</label>
    </interactant>
    <organismsDiffer>false</organismsDiffer>
    <experiments>8</experiments>
</comment>
<comment type="subcellular location">
    <subcellularLocation>
        <location evidence="6 10 12">Mitochondrion membrane</location>
        <topology evidence="2">Multi-pass membrane protein</topology>
    </subcellularLocation>
    <subcellularLocation>
        <location evidence="3 7">Nucleus inner membrane</location>
        <topology evidence="2">Multi-pass membrane protein</topology>
    </subcellularLocation>
    <subcellularLocation>
        <location evidence="7">Endoplasmic reticulum membrane</location>
        <topology evidence="2">Multi-pass membrane protein</topology>
    </subcellularLocation>
    <text evidence="7 10 12">Exclusive localizations in either the nucleus or the mitochondrion have been reported.</text>
</comment>
<comment type="alternative products">
    <event type="alternative splicing"/>
    <isoform>
        <id>P40305-2</id>
        <name>1</name>
        <name evidence="13">ISG12</name>
        <name evidence="15">ISG12A</name>
        <sequence type="displayed"/>
    </isoform>
    <isoform>
        <id>P40305-1</id>
        <name>2</name>
        <name evidence="13">ISG12delta</name>
        <name evidence="15">ISG12Adelta</name>
        <sequence type="described" ref="VSP_059909"/>
    </isoform>
    <isoform>
        <id>P40305-3</id>
        <name>3</name>
        <name evidence="13">ISG12-S</name>
        <name evidence="15">ISG12A-S</name>
        <sequence type="described" ref="VSP_059908"/>
    </isoform>
    <isoform>
        <id>P40305-4</id>
        <name>4</name>
        <name evidence="13">ISG12-Sdelta</name>
        <name evidence="15">ISG12A-Sdelta</name>
        <sequence type="described" ref="VSP_059907"/>
    </isoform>
</comment>
<comment type="induction">
    <text evidence="5 6 7 11">Up-regulated by type-I and type-II interferons.</text>
</comment>
<comment type="PTM">
    <text evidence="12">Ubiquitinated by TRIM21 via 'Lys-6'-linked ubiquitin chains leading to IFI27 mitochondrial migration.</text>
</comment>
<comment type="miscellaneous">
    <molecule>Isoform 3</molecule>
    <text evidence="4">Major isoform in blood and cervix.</text>
</comment>
<comment type="similarity">
    <text evidence="16">Belongs to the IFI6/IFI27 family.</text>
</comment>
<organism>
    <name type="scientific">Homo sapiens</name>
    <name type="common">Human</name>
    <dbReference type="NCBI Taxonomy" id="9606"/>
    <lineage>
        <taxon>Eukaryota</taxon>
        <taxon>Metazoa</taxon>
        <taxon>Chordata</taxon>
        <taxon>Craniata</taxon>
        <taxon>Vertebrata</taxon>
        <taxon>Euteleostomi</taxon>
        <taxon>Mammalia</taxon>
        <taxon>Eutheria</taxon>
        <taxon>Euarchontoglires</taxon>
        <taxon>Primates</taxon>
        <taxon>Haplorrhini</taxon>
        <taxon>Catarrhini</taxon>
        <taxon>Hominidae</taxon>
        <taxon>Homo</taxon>
    </lineage>
</organism>
<dbReference type="EMBL" id="X67325">
    <property type="protein sequence ID" value="CAA47739.1"/>
    <property type="molecule type" value="mRNA"/>
</dbReference>
<dbReference type="EMBL" id="BT006781">
    <property type="protein sequence ID" value="AAP35427.1"/>
    <property type="molecule type" value="mRNA"/>
</dbReference>
<dbReference type="EMBL" id="AK289535">
    <property type="protein sequence ID" value="BAF82224.1"/>
    <property type="molecule type" value="mRNA"/>
</dbReference>
<dbReference type="EMBL" id="AK312089">
    <property type="protein sequence ID" value="BAG35025.1"/>
    <property type="molecule type" value="mRNA"/>
</dbReference>
<dbReference type="EMBL" id="AM393107">
    <property type="protein sequence ID" value="CAL37985.1"/>
    <property type="molecule type" value="mRNA"/>
</dbReference>
<dbReference type="EMBL" id="AL079302">
    <property type="status" value="NOT_ANNOTATED_CDS"/>
    <property type="molecule type" value="Genomic_DNA"/>
</dbReference>
<dbReference type="EMBL" id="AL121838">
    <property type="status" value="NOT_ANNOTATED_CDS"/>
    <property type="molecule type" value="Genomic_DNA"/>
</dbReference>
<dbReference type="EMBL" id="KF573698">
    <property type="status" value="NOT_ANNOTATED_CDS"/>
    <property type="molecule type" value="Genomic_DNA"/>
</dbReference>
<dbReference type="EMBL" id="CH471061">
    <property type="protein sequence ID" value="EAW81556.1"/>
    <property type="molecule type" value="Genomic_DNA"/>
</dbReference>
<dbReference type="EMBL" id="CH471061">
    <property type="protein sequence ID" value="EAW81557.1"/>
    <property type="molecule type" value="Genomic_DNA"/>
</dbReference>
<dbReference type="EMBL" id="CH471061">
    <property type="protein sequence ID" value="EAW81558.1"/>
    <property type="molecule type" value="Genomic_DNA"/>
</dbReference>
<dbReference type="EMBL" id="BC015492">
    <property type="protein sequence ID" value="AAH15492.1"/>
    <property type="molecule type" value="mRNA"/>
</dbReference>
<dbReference type="EMBL" id="AJ294851">
    <property type="protein sequence ID" value="CAC10503.2"/>
    <property type="molecule type" value="mRNA"/>
</dbReference>
<dbReference type="EMBL" id="AY126456">
    <property type="protein sequence ID" value="AAM95743.1"/>
    <property type="molecule type" value="mRNA"/>
</dbReference>
<dbReference type="EMBL" id="AY126457">
    <property type="protein sequence ID" value="AAM95744.1"/>
    <property type="molecule type" value="mRNA"/>
</dbReference>
<dbReference type="EMBL" id="AY126458">
    <property type="protein sequence ID" value="AAM95745.1"/>
    <property type="molecule type" value="mRNA"/>
</dbReference>
<dbReference type="EMBL" id="BN000227">
    <property type="protein sequence ID" value="CAE00394.1"/>
    <property type="molecule type" value="mRNA"/>
</dbReference>
<dbReference type="CCDS" id="CCDS32148.1">
    <molecule id="P40305-2"/>
</dbReference>
<dbReference type="PIR" id="I38081">
    <property type="entry name" value="I38081"/>
</dbReference>
<dbReference type="RefSeq" id="NP_001123552.1">
    <molecule id="P40305-2"/>
    <property type="nucleotide sequence ID" value="NM_001130080.3"/>
</dbReference>
<dbReference type="RefSeq" id="NP_001275881.1">
    <molecule id="P40305-2"/>
    <property type="nucleotide sequence ID" value="NM_001288952.2"/>
</dbReference>
<dbReference type="RefSeq" id="NP_001275883.1">
    <property type="nucleotide sequence ID" value="NM_001288954.1"/>
</dbReference>
<dbReference type="RefSeq" id="NP_001275885.1">
    <molecule id="P40305-2"/>
    <property type="nucleotide sequence ID" value="NM_001288956.2"/>
</dbReference>
<dbReference type="RefSeq" id="NP_001275886.1">
    <property type="nucleotide sequence ID" value="NM_001288957.1"/>
</dbReference>
<dbReference type="RefSeq" id="NP_001275887.1">
    <property type="nucleotide sequence ID" value="NM_001288958.1"/>
</dbReference>
<dbReference type="RefSeq" id="NP_001275888.1">
    <molecule id="P40305-3"/>
    <property type="nucleotide sequence ID" value="NM_001288959.2"/>
</dbReference>
<dbReference type="RefSeq" id="NP_001275889.1">
    <property type="nucleotide sequence ID" value="NM_001288960.1"/>
</dbReference>
<dbReference type="RefSeq" id="NP_001275924.1">
    <property type="nucleotide sequence ID" value="NM_001288995.1"/>
</dbReference>
<dbReference type="RefSeq" id="NP_001353922.1">
    <molecule id="P40305-2"/>
    <property type="nucleotide sequence ID" value="NM_001366993.1"/>
</dbReference>
<dbReference type="RefSeq" id="NP_001353923.1">
    <molecule id="P40305-2"/>
    <property type="nucleotide sequence ID" value="NM_001366994.1"/>
</dbReference>
<dbReference type="RefSeq" id="NP_005523.3">
    <property type="nucleotide sequence ID" value="NM_005532.4"/>
</dbReference>
<dbReference type="RefSeq" id="XP_047287305.1">
    <molecule id="P40305-2"/>
    <property type="nucleotide sequence ID" value="XM_047431349.1"/>
</dbReference>
<dbReference type="RefSeq" id="XP_054184949.1">
    <molecule id="P40305-2"/>
    <property type="nucleotide sequence ID" value="XM_054328974.1"/>
</dbReference>
<dbReference type="RefSeq" id="XP_054184950.1">
    <molecule id="P40305-2"/>
    <property type="nucleotide sequence ID" value="XM_054328975.1"/>
</dbReference>
<dbReference type="BioGRID" id="109655">
    <property type="interactions" value="8"/>
</dbReference>
<dbReference type="FunCoup" id="P40305">
    <property type="interactions" value="18"/>
</dbReference>
<dbReference type="IntAct" id="P40305">
    <property type="interactions" value="17"/>
</dbReference>
<dbReference type="STRING" id="9606.ENSP00000483430"/>
<dbReference type="iPTMnet" id="P40305"/>
<dbReference type="PhosphoSitePlus" id="P40305"/>
<dbReference type="BioMuta" id="IFI27"/>
<dbReference type="DMDM" id="116242590"/>
<dbReference type="jPOST" id="P40305"/>
<dbReference type="MassIVE" id="P40305"/>
<dbReference type="PaxDb" id="9606-ENSP00000483430"/>
<dbReference type="PeptideAtlas" id="P40305"/>
<dbReference type="ProteomicsDB" id="55359"/>
<dbReference type="ProteomicsDB" id="69349"/>
<dbReference type="Antibodypedia" id="27000">
    <property type="antibodies" value="133 antibodies from 20 providers"/>
</dbReference>
<dbReference type="DNASU" id="3429"/>
<dbReference type="Ensembl" id="ENST00000612813.4">
    <molecule id="P40305-2"/>
    <property type="protein sequence ID" value="ENSP00000483430.1"/>
    <property type="gene ID" value="ENSG00000165949.13"/>
</dbReference>
<dbReference type="Ensembl" id="ENST00000612838.4">
    <molecule id="P40305-2"/>
    <property type="protein sequence ID" value="ENSP00000483932.1"/>
    <property type="gene ID" value="ENSG00000275214.4"/>
</dbReference>
<dbReference type="Ensembl" id="ENST00000613997.4">
    <molecule id="P40305-2"/>
    <property type="protein sequence ID" value="ENSP00000484089.1"/>
    <property type="gene ID" value="ENSG00000275214.4"/>
</dbReference>
<dbReference type="Ensembl" id="ENST00000615978.4">
    <molecule id="P40305-3"/>
    <property type="protein sequence ID" value="ENSP00000483291.1"/>
    <property type="gene ID" value="ENSG00000275214.4"/>
</dbReference>
<dbReference type="Ensembl" id="ENST00000616764.5">
    <molecule id="P40305-2"/>
    <property type="protein sequence ID" value="ENSP00000477753.1"/>
    <property type="gene ID" value="ENSG00000165949.13"/>
</dbReference>
<dbReference type="Ensembl" id="ENST00000618863.1">
    <molecule id="P40305-3"/>
    <property type="protein sequence ID" value="ENSP00000482635.1"/>
    <property type="gene ID" value="ENSG00000165949.13"/>
</dbReference>
<dbReference type="Ensembl" id="ENST00000621160.5">
    <molecule id="P40305-2"/>
    <property type="protein sequence ID" value="ENSP00000483498.1"/>
    <property type="gene ID" value="ENSG00000165949.13"/>
</dbReference>
<dbReference type="Ensembl" id="ENST00000627111.2">
    <molecule id="P40305-2"/>
    <property type="protein sequence ID" value="ENSP00000486608.1"/>
    <property type="gene ID" value="ENSG00000275214.4"/>
</dbReference>
<dbReference type="GeneID" id="3429"/>
<dbReference type="KEGG" id="hsa:3429"/>
<dbReference type="MANE-Select" id="ENST00000621160.5">
    <property type="protein sequence ID" value="ENSP00000483498.1"/>
    <property type="RefSeq nucleotide sequence ID" value="NM_001130080.3"/>
    <property type="RefSeq protein sequence ID" value="NP_001123552.1"/>
</dbReference>
<dbReference type="UCSC" id="uc032bkg.2">
    <property type="organism name" value="human"/>
</dbReference>
<dbReference type="UCSC" id="uc032bkj.2">
    <property type="organism name" value="human"/>
</dbReference>
<dbReference type="UCSC" id="uc059erm.1">
    <property type="organism name" value="human"/>
</dbReference>
<dbReference type="AGR" id="HGNC:5397"/>
<dbReference type="CTD" id="3429"/>
<dbReference type="DisGeNET" id="3429"/>
<dbReference type="GeneCards" id="IFI27"/>
<dbReference type="HGNC" id="HGNC:5397">
    <property type="gene designation" value="IFI27"/>
</dbReference>
<dbReference type="HPA" id="ENSG00000165949">
    <property type="expression patterns" value="Low tissue specificity"/>
</dbReference>
<dbReference type="MIM" id="600009">
    <property type="type" value="gene"/>
</dbReference>
<dbReference type="neXtProt" id="NX_P40305"/>
<dbReference type="OpenTargets" id="ENSG00000165949"/>
<dbReference type="PharmGKB" id="PA29643"/>
<dbReference type="VEuPathDB" id="HostDB:ENSG00000165949"/>
<dbReference type="eggNOG" id="ENOG502S85T">
    <property type="taxonomic scope" value="Eukaryota"/>
</dbReference>
<dbReference type="GeneTree" id="ENSGT00940000164233"/>
<dbReference type="HOGENOM" id="CLU_142338_3_0_1"/>
<dbReference type="InParanoid" id="P40305"/>
<dbReference type="OMA" id="THRMFFW"/>
<dbReference type="PAN-GO" id="P40305">
    <property type="GO annotations" value="2 GO annotations based on evolutionary models"/>
</dbReference>
<dbReference type="PhylomeDB" id="P40305"/>
<dbReference type="TreeFam" id="TF340510"/>
<dbReference type="PathwayCommons" id="P40305"/>
<dbReference type="Reactome" id="R-HSA-909733">
    <property type="pathway name" value="Interferon alpha/beta signaling"/>
</dbReference>
<dbReference type="Reactome" id="R-HSA-9909505">
    <property type="pathway name" value="Modulation of host responses by IFN-stimulated genes"/>
</dbReference>
<dbReference type="SignaLink" id="P40305"/>
<dbReference type="BioGRID-ORCS" id="3429">
    <property type="hits" value="5 hits in 1161 CRISPR screens"/>
</dbReference>
<dbReference type="ChiTaRS" id="IFI27">
    <property type="organism name" value="human"/>
</dbReference>
<dbReference type="GeneWiki" id="IFI27"/>
<dbReference type="GenomeRNAi" id="3429"/>
<dbReference type="Pharos" id="P40305">
    <property type="development level" value="Tbio"/>
</dbReference>
<dbReference type="PRO" id="PR:P40305"/>
<dbReference type="Proteomes" id="UP000005640">
    <property type="component" value="Chromosome 14"/>
</dbReference>
<dbReference type="RNAct" id="P40305">
    <property type="molecule type" value="protein"/>
</dbReference>
<dbReference type="Bgee" id="ENSG00000165949">
    <property type="expression patterns" value="Expressed in right lung and 100 other cell types or tissues"/>
</dbReference>
<dbReference type="ExpressionAtlas" id="P40305">
    <property type="expression patterns" value="baseline and differential"/>
</dbReference>
<dbReference type="GO" id="GO:0005789">
    <property type="term" value="C:endoplasmic reticulum membrane"/>
    <property type="evidence" value="ECO:0007669"/>
    <property type="project" value="UniProtKB-SubCell"/>
</dbReference>
<dbReference type="GO" id="GO:0031966">
    <property type="term" value="C:mitochondrial membrane"/>
    <property type="evidence" value="ECO:0000314"/>
    <property type="project" value="UniProtKB"/>
</dbReference>
<dbReference type="GO" id="GO:0005741">
    <property type="term" value="C:mitochondrial outer membrane"/>
    <property type="evidence" value="ECO:0000304"/>
    <property type="project" value="Reactome"/>
</dbReference>
<dbReference type="GO" id="GO:0005739">
    <property type="term" value="C:mitochondrion"/>
    <property type="evidence" value="ECO:0000314"/>
    <property type="project" value="UniProt"/>
</dbReference>
<dbReference type="GO" id="GO:0005635">
    <property type="term" value="C:nuclear envelope"/>
    <property type="evidence" value="ECO:0000314"/>
    <property type="project" value="UniProtKB"/>
</dbReference>
<dbReference type="GO" id="GO:0005637">
    <property type="term" value="C:nuclear inner membrane"/>
    <property type="evidence" value="ECO:0000314"/>
    <property type="project" value="MGI"/>
</dbReference>
<dbReference type="GO" id="GO:0042802">
    <property type="term" value="F:identical protein binding"/>
    <property type="evidence" value="ECO:0000314"/>
    <property type="project" value="UniProtKB"/>
</dbReference>
<dbReference type="GO" id="GO:0005521">
    <property type="term" value="F:lamin binding"/>
    <property type="evidence" value="ECO:0000314"/>
    <property type="project" value="MGI"/>
</dbReference>
<dbReference type="GO" id="GO:0060090">
    <property type="term" value="F:molecular adaptor activity"/>
    <property type="evidence" value="ECO:0000314"/>
    <property type="project" value="UniProt"/>
</dbReference>
<dbReference type="GO" id="GO:0061629">
    <property type="term" value="F:RNA polymerase II-specific DNA-binding transcription factor binding"/>
    <property type="evidence" value="ECO:0000353"/>
    <property type="project" value="MGI"/>
</dbReference>
<dbReference type="GO" id="GO:0006915">
    <property type="term" value="P:apoptotic process"/>
    <property type="evidence" value="ECO:0000314"/>
    <property type="project" value="UniProtKB"/>
</dbReference>
<dbReference type="GO" id="GO:0051607">
    <property type="term" value="P:defense response to virus"/>
    <property type="evidence" value="ECO:0000315"/>
    <property type="project" value="UniProtKB"/>
</dbReference>
<dbReference type="GO" id="GO:0097191">
    <property type="term" value="P:extrinsic apoptotic signaling pathway"/>
    <property type="evidence" value="ECO:0000315"/>
    <property type="project" value="UniProtKB"/>
</dbReference>
<dbReference type="GO" id="GO:0045087">
    <property type="term" value="P:innate immune response"/>
    <property type="evidence" value="ECO:0000315"/>
    <property type="project" value="UniProtKB"/>
</dbReference>
<dbReference type="GO" id="GO:0097193">
    <property type="term" value="P:intrinsic apoptotic signaling pathway"/>
    <property type="evidence" value="ECO:0000318"/>
    <property type="project" value="GO_Central"/>
</dbReference>
<dbReference type="GO" id="GO:0044827">
    <property type="term" value="P:modulation by host of viral genome replication"/>
    <property type="evidence" value="ECO:0000315"/>
    <property type="project" value="UniProtKB"/>
</dbReference>
<dbReference type="GO" id="GO:0000122">
    <property type="term" value="P:negative regulation of transcription by RNA polymerase II"/>
    <property type="evidence" value="ECO:0000316"/>
    <property type="project" value="MGI"/>
</dbReference>
<dbReference type="GO" id="GO:0043161">
    <property type="term" value="P:proteasome-mediated ubiquitin-dependent protein catabolic process"/>
    <property type="evidence" value="ECO:0000315"/>
    <property type="project" value="UniProtKB"/>
</dbReference>
<dbReference type="GO" id="GO:0070936">
    <property type="term" value="P:protein K48-linked ubiquitination"/>
    <property type="evidence" value="ECO:0000315"/>
    <property type="project" value="UniProtKB"/>
</dbReference>
<dbReference type="GO" id="GO:0070269">
    <property type="term" value="P:pyroptotic inflammatory response"/>
    <property type="evidence" value="ECO:0000314"/>
    <property type="project" value="UniProt"/>
</dbReference>
<dbReference type="GO" id="GO:0046825">
    <property type="term" value="P:regulation of protein export from nucleus"/>
    <property type="evidence" value="ECO:0000316"/>
    <property type="project" value="MGI"/>
</dbReference>
<dbReference type="GO" id="GO:0060337">
    <property type="term" value="P:type I interferon-mediated signaling pathway"/>
    <property type="evidence" value="ECO:0000315"/>
    <property type="project" value="UniProtKB"/>
</dbReference>
<dbReference type="Gene3D" id="6.10.110.10">
    <property type="match status" value="1"/>
</dbReference>
<dbReference type="InterPro" id="IPR009311">
    <property type="entry name" value="IFI6/IFI27-like"/>
</dbReference>
<dbReference type="InterPro" id="IPR038213">
    <property type="entry name" value="IFI6/IFI27-like_sf"/>
</dbReference>
<dbReference type="PANTHER" id="PTHR16932">
    <property type="entry name" value="INTERFERON ALPHA-INDUCIBLE PROTEIN 27"/>
    <property type="match status" value="1"/>
</dbReference>
<dbReference type="PANTHER" id="PTHR16932:SF2">
    <property type="entry name" value="INTERFERON ALPHA-INDUCIBLE PROTEIN 27, MITOCHONDRIAL"/>
    <property type="match status" value="1"/>
</dbReference>
<dbReference type="Pfam" id="PF06140">
    <property type="entry name" value="Ifi-6-16"/>
    <property type="match status" value="1"/>
</dbReference>